<feature type="chain" id="PRO_0000140154" description="GMP synthase [glutamine-hydrolyzing]">
    <location>
        <begin position="1"/>
        <end position="511"/>
    </location>
</feature>
<feature type="domain" description="Glutamine amidotransferase type-1" evidence="1">
    <location>
        <begin position="6"/>
        <end position="196"/>
    </location>
</feature>
<feature type="domain" description="GMPS ATP-PPase" evidence="1">
    <location>
        <begin position="197"/>
        <end position="386"/>
    </location>
</feature>
<feature type="active site" description="Nucleophile" evidence="1">
    <location>
        <position position="83"/>
    </location>
</feature>
<feature type="active site" evidence="1">
    <location>
        <position position="170"/>
    </location>
</feature>
<feature type="active site" evidence="1">
    <location>
        <position position="172"/>
    </location>
</feature>
<feature type="binding site" evidence="1">
    <location>
        <begin position="224"/>
        <end position="230"/>
    </location>
    <ligand>
        <name>ATP</name>
        <dbReference type="ChEBI" id="CHEBI:30616"/>
    </ligand>
</feature>
<protein>
    <recommendedName>
        <fullName evidence="1">GMP synthase [glutamine-hydrolyzing]</fullName>
        <ecNumber evidence="1">6.3.5.2</ecNumber>
    </recommendedName>
    <alternativeName>
        <fullName evidence="1">GMP synthetase</fullName>
    </alternativeName>
    <alternativeName>
        <fullName evidence="1">Glutamine amidotransferase</fullName>
    </alternativeName>
</protein>
<reference key="1">
    <citation type="journal article" date="2002" name="Nucleic Acids Res.">
        <title>Genome sequence of Oceanobacillus iheyensis isolated from the Iheya Ridge and its unexpected adaptive capabilities to extreme environments.</title>
        <authorList>
            <person name="Takami H."/>
            <person name="Takaki Y."/>
            <person name="Uchiyama I."/>
        </authorList>
    </citation>
    <scope>NUCLEOTIDE SEQUENCE [LARGE SCALE GENOMIC DNA]</scope>
    <source>
        <strain>DSM 14371 / CIP 107618 / JCM 11309 / KCTC 3954 / HTE831</strain>
    </source>
</reference>
<keyword id="KW-0067">ATP-binding</keyword>
<keyword id="KW-0315">Glutamine amidotransferase</keyword>
<keyword id="KW-0332">GMP biosynthesis</keyword>
<keyword id="KW-0436">Ligase</keyword>
<keyword id="KW-0547">Nucleotide-binding</keyword>
<keyword id="KW-0658">Purine biosynthesis</keyword>
<keyword id="KW-1185">Reference proteome</keyword>
<dbReference type="EC" id="6.3.5.2" evidence="1"/>
<dbReference type="EMBL" id="BA000028">
    <property type="protein sequence ID" value="BAC12672.1"/>
    <property type="molecule type" value="Genomic_DNA"/>
</dbReference>
<dbReference type="RefSeq" id="WP_011065124.1">
    <property type="nucleotide sequence ID" value="NC_004193.1"/>
</dbReference>
<dbReference type="SMR" id="Q8CXK8"/>
<dbReference type="STRING" id="221109.gene:10732937"/>
<dbReference type="KEGG" id="oih:OB0716"/>
<dbReference type="eggNOG" id="COG0518">
    <property type="taxonomic scope" value="Bacteria"/>
</dbReference>
<dbReference type="eggNOG" id="COG0519">
    <property type="taxonomic scope" value="Bacteria"/>
</dbReference>
<dbReference type="HOGENOM" id="CLU_014340_0_5_9"/>
<dbReference type="OrthoDB" id="9802219at2"/>
<dbReference type="PhylomeDB" id="Q8CXK8"/>
<dbReference type="UniPathway" id="UPA00189">
    <property type="reaction ID" value="UER00296"/>
</dbReference>
<dbReference type="Proteomes" id="UP000000822">
    <property type="component" value="Chromosome"/>
</dbReference>
<dbReference type="GO" id="GO:0005829">
    <property type="term" value="C:cytosol"/>
    <property type="evidence" value="ECO:0007669"/>
    <property type="project" value="TreeGrafter"/>
</dbReference>
<dbReference type="GO" id="GO:0005524">
    <property type="term" value="F:ATP binding"/>
    <property type="evidence" value="ECO:0007669"/>
    <property type="project" value="UniProtKB-UniRule"/>
</dbReference>
<dbReference type="GO" id="GO:0003921">
    <property type="term" value="F:GMP synthase activity"/>
    <property type="evidence" value="ECO:0007669"/>
    <property type="project" value="InterPro"/>
</dbReference>
<dbReference type="CDD" id="cd01742">
    <property type="entry name" value="GATase1_GMP_Synthase"/>
    <property type="match status" value="1"/>
</dbReference>
<dbReference type="CDD" id="cd01997">
    <property type="entry name" value="GMP_synthase_C"/>
    <property type="match status" value="1"/>
</dbReference>
<dbReference type="FunFam" id="3.30.300.10:FF:000002">
    <property type="entry name" value="GMP synthase [glutamine-hydrolyzing]"/>
    <property type="match status" value="1"/>
</dbReference>
<dbReference type="FunFam" id="3.40.50.620:FF:000001">
    <property type="entry name" value="GMP synthase [glutamine-hydrolyzing]"/>
    <property type="match status" value="1"/>
</dbReference>
<dbReference type="FunFam" id="3.40.50.880:FF:000001">
    <property type="entry name" value="GMP synthase [glutamine-hydrolyzing]"/>
    <property type="match status" value="1"/>
</dbReference>
<dbReference type="Gene3D" id="3.30.300.10">
    <property type="match status" value="1"/>
</dbReference>
<dbReference type="Gene3D" id="3.40.50.880">
    <property type="match status" value="1"/>
</dbReference>
<dbReference type="Gene3D" id="3.40.50.620">
    <property type="entry name" value="HUPs"/>
    <property type="match status" value="1"/>
</dbReference>
<dbReference type="HAMAP" id="MF_00344">
    <property type="entry name" value="GMP_synthase"/>
    <property type="match status" value="1"/>
</dbReference>
<dbReference type="InterPro" id="IPR029062">
    <property type="entry name" value="Class_I_gatase-like"/>
</dbReference>
<dbReference type="InterPro" id="IPR017926">
    <property type="entry name" value="GATASE"/>
</dbReference>
<dbReference type="InterPro" id="IPR001674">
    <property type="entry name" value="GMP_synth_C"/>
</dbReference>
<dbReference type="InterPro" id="IPR004739">
    <property type="entry name" value="GMP_synth_GATase"/>
</dbReference>
<dbReference type="InterPro" id="IPR022955">
    <property type="entry name" value="GMP_synthase"/>
</dbReference>
<dbReference type="InterPro" id="IPR025777">
    <property type="entry name" value="GMPS_ATP_PPase_dom"/>
</dbReference>
<dbReference type="InterPro" id="IPR022310">
    <property type="entry name" value="NAD/GMP_synthase"/>
</dbReference>
<dbReference type="InterPro" id="IPR014729">
    <property type="entry name" value="Rossmann-like_a/b/a_fold"/>
</dbReference>
<dbReference type="NCBIfam" id="TIGR00884">
    <property type="entry name" value="guaA_Cterm"/>
    <property type="match status" value="1"/>
</dbReference>
<dbReference type="NCBIfam" id="TIGR00888">
    <property type="entry name" value="guaA_Nterm"/>
    <property type="match status" value="1"/>
</dbReference>
<dbReference type="NCBIfam" id="NF000848">
    <property type="entry name" value="PRK00074.1"/>
    <property type="match status" value="1"/>
</dbReference>
<dbReference type="PANTHER" id="PTHR11922:SF2">
    <property type="entry name" value="GMP SYNTHASE [GLUTAMINE-HYDROLYZING]"/>
    <property type="match status" value="1"/>
</dbReference>
<dbReference type="PANTHER" id="PTHR11922">
    <property type="entry name" value="GMP SYNTHASE-RELATED"/>
    <property type="match status" value="1"/>
</dbReference>
<dbReference type="Pfam" id="PF00117">
    <property type="entry name" value="GATase"/>
    <property type="match status" value="1"/>
</dbReference>
<dbReference type="Pfam" id="PF00958">
    <property type="entry name" value="GMP_synt_C"/>
    <property type="match status" value="1"/>
</dbReference>
<dbReference type="Pfam" id="PF02540">
    <property type="entry name" value="NAD_synthase"/>
    <property type="match status" value="1"/>
</dbReference>
<dbReference type="PRINTS" id="PR00097">
    <property type="entry name" value="ANTSNTHASEII"/>
</dbReference>
<dbReference type="PRINTS" id="PR00099">
    <property type="entry name" value="CPSGATASE"/>
</dbReference>
<dbReference type="PRINTS" id="PR00096">
    <property type="entry name" value="GATASE"/>
</dbReference>
<dbReference type="SUPFAM" id="SSF52402">
    <property type="entry name" value="Adenine nucleotide alpha hydrolases-like"/>
    <property type="match status" value="1"/>
</dbReference>
<dbReference type="SUPFAM" id="SSF52317">
    <property type="entry name" value="Class I glutamine amidotransferase-like"/>
    <property type="match status" value="1"/>
</dbReference>
<dbReference type="SUPFAM" id="SSF54810">
    <property type="entry name" value="GMP synthetase C-terminal dimerisation domain"/>
    <property type="match status" value="1"/>
</dbReference>
<dbReference type="PROSITE" id="PS51273">
    <property type="entry name" value="GATASE_TYPE_1"/>
    <property type="match status" value="1"/>
</dbReference>
<dbReference type="PROSITE" id="PS51553">
    <property type="entry name" value="GMPS_ATP_PPASE"/>
    <property type="match status" value="1"/>
</dbReference>
<organism>
    <name type="scientific">Oceanobacillus iheyensis (strain DSM 14371 / CIP 107618 / JCM 11309 / KCTC 3954 / HTE831)</name>
    <dbReference type="NCBI Taxonomy" id="221109"/>
    <lineage>
        <taxon>Bacteria</taxon>
        <taxon>Bacillati</taxon>
        <taxon>Bacillota</taxon>
        <taxon>Bacilli</taxon>
        <taxon>Bacillales</taxon>
        <taxon>Bacillaceae</taxon>
        <taxon>Oceanobacillus</taxon>
    </lineage>
</organism>
<accession>Q8CXK8</accession>
<evidence type="ECO:0000255" key="1">
    <source>
        <dbReference type="HAMAP-Rule" id="MF_00344"/>
    </source>
</evidence>
<comment type="function">
    <text evidence="1">Catalyzes the synthesis of GMP from XMP.</text>
</comment>
<comment type="catalytic activity">
    <reaction evidence="1">
        <text>XMP + L-glutamine + ATP + H2O = GMP + L-glutamate + AMP + diphosphate + 2 H(+)</text>
        <dbReference type="Rhea" id="RHEA:11680"/>
        <dbReference type="ChEBI" id="CHEBI:15377"/>
        <dbReference type="ChEBI" id="CHEBI:15378"/>
        <dbReference type="ChEBI" id="CHEBI:29985"/>
        <dbReference type="ChEBI" id="CHEBI:30616"/>
        <dbReference type="ChEBI" id="CHEBI:33019"/>
        <dbReference type="ChEBI" id="CHEBI:57464"/>
        <dbReference type="ChEBI" id="CHEBI:58115"/>
        <dbReference type="ChEBI" id="CHEBI:58359"/>
        <dbReference type="ChEBI" id="CHEBI:456215"/>
        <dbReference type="EC" id="6.3.5.2"/>
    </reaction>
</comment>
<comment type="pathway">
    <text evidence="1">Purine metabolism; GMP biosynthesis; GMP from XMP (L-Gln route): step 1/1.</text>
</comment>
<comment type="subunit">
    <text evidence="1">Homodimer.</text>
</comment>
<proteinExistence type="inferred from homology"/>
<name>GUAA_OCEIH</name>
<sequence>MENNELVLVLDFGSQYNQLITRRIREFGVYSELHSHKLTAEEIKEMNPKGIILSGGPHSVYDENSFRCDEGIFELGIPVLGICYGMQLMSLHYDGKVERSKNREYGKALIELDGEPVLFKDTPKGQTVWMSHGDKVTAAPPSFNIDATSPSTPIAAISNVEKNLYGVQFHPEVRHTEYGNDLLNRFVFDVCGCTGDWSIENFIDMEVEKIQETVGDRKVLCALSGGVDSSVVAALIHKAIGDQLTCIFVDHGLLRKNEGDDVMKVFAEDFQMNIIKVDAKDRFLFKLEGVSDPELKRKIIGNEFIYVFDDEASKLKDIDFLAQGTLYTDVIESGTDTAQTIKSHHNVGGLPEDMQFTLIEPLNTLFKDEVRELGSQLGVPDRIVWRQPFPGPGLAIRILGEVTEEHLEIVRESDAILREEIAKAGLDRDIWQYFTVLPNIKSVGVMGDARTYAHTIGIRAVTSIDGMTSDWARIPWDVLERISTRLVNDVDNINRVVYDVTSKPPATIEWE</sequence>
<gene>
    <name evidence="1" type="primary">guaA</name>
    <name type="ordered locus">OB0716</name>
</gene>